<proteinExistence type="inferred from homology"/>
<reference key="1">
    <citation type="journal article" date="2005" name="Genome Res.">
        <title>Complete genome sequence of the hyperthermophilic archaeon Thermococcus kodakaraensis KOD1 and comparison with Pyrococcus genomes.</title>
        <authorList>
            <person name="Fukui T."/>
            <person name="Atomi H."/>
            <person name="Kanai T."/>
            <person name="Matsumi R."/>
            <person name="Fujiwara S."/>
            <person name="Imanaka T."/>
        </authorList>
    </citation>
    <scope>NUCLEOTIDE SEQUENCE [LARGE SCALE GENOMIC DNA]</scope>
    <source>
        <strain>ATCC BAA-918 / JCM 12380 / KOD1</strain>
    </source>
</reference>
<gene>
    <name evidence="1" type="primary">taw3-2</name>
    <name type="ordered locus">TK1907</name>
</gene>
<evidence type="ECO:0000255" key="1">
    <source>
        <dbReference type="HAMAP-Rule" id="MF_00266"/>
    </source>
</evidence>
<sequence>MKAKREALQSLFTAMRDGKVDGDIIDLLLLINSIKGIYTTSSCSGRIGIIEEPALGAKPLSRWLIKVHRPIEFEEAKEALKNAKEGIIFLKSQPPIFHVVAEDLEKARKLHELGLASGFKYTTFKVISKRYLVEINATEYLTAPLGRDGRVLVDDGYLRFAVEIGNEMLRRSKGRLPRLEENFRRLREELGTDELFYELVEEYKIRENWELP</sequence>
<feature type="chain" id="PRO_0000157101" description="tRNA(Phe) 7-((3-amino-3-carboxypropyl)-4-demethylwyosine(37)-N(4))-methyltransferase 2">
    <location>
        <begin position="1"/>
        <end position="212"/>
    </location>
</feature>
<name>TYW32_THEKO</name>
<accession>Q5JES6</accession>
<protein>
    <recommendedName>
        <fullName evidence="1">tRNA(Phe) 7-((3-amino-3-carboxypropyl)-4-demethylwyosine(37)-N(4))-methyltransferase 2</fullName>
        <ecNumber evidence="1">2.1.1.282</ecNumber>
    </recommendedName>
    <alternativeName>
        <fullName evidence="1">tRNA wyosine derivatives biosynthesis protein Taw3 2</fullName>
    </alternativeName>
</protein>
<keyword id="KW-0489">Methyltransferase</keyword>
<keyword id="KW-1185">Reference proteome</keyword>
<keyword id="KW-0949">S-adenosyl-L-methionine</keyword>
<keyword id="KW-0808">Transferase</keyword>
<keyword id="KW-0819">tRNA processing</keyword>
<organism>
    <name type="scientific">Thermococcus kodakarensis (strain ATCC BAA-918 / JCM 12380 / KOD1)</name>
    <name type="common">Pyrococcus kodakaraensis (strain KOD1)</name>
    <dbReference type="NCBI Taxonomy" id="69014"/>
    <lineage>
        <taxon>Archaea</taxon>
        <taxon>Methanobacteriati</taxon>
        <taxon>Methanobacteriota</taxon>
        <taxon>Thermococci</taxon>
        <taxon>Thermococcales</taxon>
        <taxon>Thermococcaceae</taxon>
        <taxon>Thermococcus</taxon>
    </lineage>
</organism>
<comment type="function">
    <text evidence="1">S-adenosyl-L-methionine-dependent methyltransferase that acts as a component of the wyosine derivatives biosynthesis pathway. Probably methylates N-4 position of wybutosine-86 to produce wybutosine-72.</text>
</comment>
<comment type="catalytic activity">
    <reaction evidence="1">
        <text>4-demethyl-7-[(3S)-3-amino-3-carboxypropyl]wyosine(37) in tRNA(Phe) + S-adenosyl-L-methionine = 7-[(3S)-3-amino-3-carboxypropyl]wyosine(37) in tRNA(Phe) + S-adenosyl-L-homocysteine + H(+)</text>
        <dbReference type="Rhea" id="RHEA:36635"/>
        <dbReference type="Rhea" id="RHEA-COMP:10378"/>
        <dbReference type="Rhea" id="RHEA-COMP:10379"/>
        <dbReference type="ChEBI" id="CHEBI:15378"/>
        <dbReference type="ChEBI" id="CHEBI:57856"/>
        <dbReference type="ChEBI" id="CHEBI:59789"/>
        <dbReference type="ChEBI" id="CHEBI:73543"/>
        <dbReference type="ChEBI" id="CHEBI:73550"/>
        <dbReference type="EC" id="2.1.1.282"/>
    </reaction>
</comment>
<comment type="similarity">
    <text evidence="1">Belongs to the TYW3 family.</text>
</comment>
<dbReference type="EC" id="2.1.1.282" evidence="1"/>
<dbReference type="EMBL" id="AP006878">
    <property type="protein sequence ID" value="BAD86096.1"/>
    <property type="molecule type" value="Genomic_DNA"/>
</dbReference>
<dbReference type="RefSeq" id="WP_011250858.1">
    <property type="nucleotide sequence ID" value="NC_006624.1"/>
</dbReference>
<dbReference type="SMR" id="Q5JES6"/>
<dbReference type="STRING" id="69014.TK1907"/>
<dbReference type="EnsemblBacteria" id="BAD86096">
    <property type="protein sequence ID" value="BAD86096"/>
    <property type="gene ID" value="TK1907"/>
</dbReference>
<dbReference type="GeneID" id="78448439"/>
<dbReference type="KEGG" id="tko:TK1907"/>
<dbReference type="PATRIC" id="fig|69014.16.peg.1864"/>
<dbReference type="eggNOG" id="arCOG04156">
    <property type="taxonomic scope" value="Archaea"/>
</dbReference>
<dbReference type="HOGENOM" id="CLU_047426_2_0_2"/>
<dbReference type="InParanoid" id="Q5JES6"/>
<dbReference type="OrthoDB" id="19299at2157"/>
<dbReference type="PhylomeDB" id="Q5JES6"/>
<dbReference type="Proteomes" id="UP000000536">
    <property type="component" value="Chromosome"/>
</dbReference>
<dbReference type="GO" id="GO:0008175">
    <property type="term" value="F:tRNA methyltransferase activity"/>
    <property type="evidence" value="ECO:0007669"/>
    <property type="project" value="InterPro"/>
</dbReference>
<dbReference type="GO" id="GO:0030488">
    <property type="term" value="P:tRNA methylation"/>
    <property type="evidence" value="ECO:0007669"/>
    <property type="project" value="InterPro"/>
</dbReference>
<dbReference type="GO" id="GO:0031591">
    <property type="term" value="P:wybutosine biosynthetic process"/>
    <property type="evidence" value="ECO:0007669"/>
    <property type="project" value="InterPro"/>
</dbReference>
<dbReference type="FunFam" id="3.30.1960.10:FF:000010">
    <property type="entry name" value="tRNA(Phe) 7-((3-amino-3-carboxypropyl)-4-demethylwyosine(37)-N(4))-methyltransferase 1"/>
    <property type="match status" value="1"/>
</dbReference>
<dbReference type="Gene3D" id="3.30.1960.10">
    <property type="entry name" value="tRNA wybutosine-synthesizing-like"/>
    <property type="match status" value="1"/>
</dbReference>
<dbReference type="HAMAP" id="MF_00266">
    <property type="entry name" value="TYW3_archaea"/>
    <property type="match status" value="1"/>
</dbReference>
<dbReference type="InterPro" id="IPR022908">
    <property type="entry name" value="Taw3"/>
</dbReference>
<dbReference type="InterPro" id="IPR003827">
    <property type="entry name" value="tRNA_yW-synthesising"/>
</dbReference>
<dbReference type="InterPro" id="IPR036602">
    <property type="entry name" value="tRNA_yW-synthesising-like_sf"/>
</dbReference>
<dbReference type="NCBIfam" id="NF003264">
    <property type="entry name" value="PRK04235.1-2"/>
    <property type="match status" value="1"/>
</dbReference>
<dbReference type="NCBIfam" id="NF047731">
    <property type="entry name" value="tRNAMtaseTaw3"/>
    <property type="match status" value="1"/>
</dbReference>
<dbReference type="PANTHER" id="PTHR48418">
    <property type="entry name" value="TRNA WYBUTOSINE-SYNTHESIZING PROTEIN 3"/>
    <property type="match status" value="1"/>
</dbReference>
<dbReference type="PANTHER" id="PTHR48418:SF1">
    <property type="entry name" value="TRNA WYBUTOSINE-SYNTHESIZING PROTEIN 3"/>
    <property type="match status" value="1"/>
</dbReference>
<dbReference type="Pfam" id="PF02676">
    <property type="entry name" value="TYW3"/>
    <property type="match status" value="1"/>
</dbReference>
<dbReference type="SUPFAM" id="SSF111278">
    <property type="entry name" value="SSo0622-like"/>
    <property type="match status" value="1"/>
</dbReference>